<sequence>MKNDERTPLPDALAQPLERFYAYLHTEKGLSLYTQRNYKQQLETMTQYLVQVGLTHWTQLDSAWVRQLVMQGKRQGMKASSIATRLSSLRSFLDFLILRGELQANPAKGVSAPRKQRTLPKNLDVDEMAQLLEVTDDDPLSIRDRAIMELMYGAGLRLAELVSIDIKDVNLSEGEIRVIGKGNKERKVWFAGQAQEWVGKWLKLRSQLADSAETALFVSKLGTRISHRSVQKRMAEWGQKQAVASHISPHKLRHSFATHMLESSNNLRAVQELLGHENIATTQIYTHLDFQHLAQVYDQAHPRARKKNKDD</sequence>
<name>XERC_VIBCM</name>
<comment type="function">
    <text evidence="1">Site-specific tyrosine recombinase, which acts by catalyzing the cutting and rejoining of the recombining DNA molecules. The XerC-XerD complex is essential to convert dimers of the bacterial chromosome into monomers to permit their segregation at cell division. It also contributes to the segregational stability of plasmids.</text>
</comment>
<comment type="subunit">
    <text evidence="1">Forms a cyclic heterotetrameric complex composed of two molecules of XerC and two molecules of XerD.</text>
</comment>
<comment type="subcellular location">
    <subcellularLocation>
        <location evidence="1">Cytoplasm</location>
    </subcellularLocation>
</comment>
<comment type="similarity">
    <text evidence="1">Belongs to the 'phage' integrase family. XerC subfamily.</text>
</comment>
<protein>
    <recommendedName>
        <fullName evidence="1">Tyrosine recombinase XerC</fullName>
    </recommendedName>
</protein>
<dbReference type="EMBL" id="CP001233">
    <property type="protein sequence ID" value="ACP04464.1"/>
    <property type="molecule type" value="Genomic_DNA"/>
</dbReference>
<dbReference type="RefSeq" id="WP_000786732.1">
    <property type="nucleotide sequence ID" value="NC_012578.1"/>
</dbReference>
<dbReference type="SMR" id="C3LPX0"/>
<dbReference type="KEGG" id="vcm:VCM66_0128"/>
<dbReference type="HOGENOM" id="CLU_027562_9_0_6"/>
<dbReference type="Proteomes" id="UP000001217">
    <property type="component" value="Chromosome I"/>
</dbReference>
<dbReference type="GO" id="GO:0005737">
    <property type="term" value="C:cytoplasm"/>
    <property type="evidence" value="ECO:0007669"/>
    <property type="project" value="UniProtKB-SubCell"/>
</dbReference>
<dbReference type="GO" id="GO:0003677">
    <property type="term" value="F:DNA binding"/>
    <property type="evidence" value="ECO:0007669"/>
    <property type="project" value="UniProtKB-KW"/>
</dbReference>
<dbReference type="GO" id="GO:0009037">
    <property type="term" value="F:tyrosine-based site-specific recombinase activity"/>
    <property type="evidence" value="ECO:0007669"/>
    <property type="project" value="UniProtKB-UniRule"/>
</dbReference>
<dbReference type="GO" id="GO:0051301">
    <property type="term" value="P:cell division"/>
    <property type="evidence" value="ECO:0007669"/>
    <property type="project" value="UniProtKB-KW"/>
</dbReference>
<dbReference type="GO" id="GO:0007059">
    <property type="term" value="P:chromosome segregation"/>
    <property type="evidence" value="ECO:0007669"/>
    <property type="project" value="UniProtKB-UniRule"/>
</dbReference>
<dbReference type="GO" id="GO:0006313">
    <property type="term" value="P:DNA transposition"/>
    <property type="evidence" value="ECO:0007669"/>
    <property type="project" value="UniProtKB-UniRule"/>
</dbReference>
<dbReference type="CDD" id="cd00798">
    <property type="entry name" value="INT_XerDC_C"/>
    <property type="match status" value="1"/>
</dbReference>
<dbReference type="FunFam" id="1.10.443.10:FF:000002">
    <property type="entry name" value="Tyrosine recombinase XerC"/>
    <property type="match status" value="1"/>
</dbReference>
<dbReference type="Gene3D" id="1.10.150.130">
    <property type="match status" value="1"/>
</dbReference>
<dbReference type="Gene3D" id="1.10.443.10">
    <property type="entry name" value="Intergrase catalytic core"/>
    <property type="match status" value="1"/>
</dbReference>
<dbReference type="HAMAP" id="MF_01808">
    <property type="entry name" value="Recomb_XerC_XerD"/>
    <property type="match status" value="1"/>
</dbReference>
<dbReference type="InterPro" id="IPR044068">
    <property type="entry name" value="CB"/>
</dbReference>
<dbReference type="InterPro" id="IPR011010">
    <property type="entry name" value="DNA_brk_join_enz"/>
</dbReference>
<dbReference type="InterPro" id="IPR013762">
    <property type="entry name" value="Integrase-like_cat_sf"/>
</dbReference>
<dbReference type="InterPro" id="IPR002104">
    <property type="entry name" value="Integrase_catalytic"/>
</dbReference>
<dbReference type="InterPro" id="IPR010998">
    <property type="entry name" value="Integrase_recombinase_N"/>
</dbReference>
<dbReference type="InterPro" id="IPR004107">
    <property type="entry name" value="Integrase_SAM-like_N"/>
</dbReference>
<dbReference type="InterPro" id="IPR011931">
    <property type="entry name" value="Recomb_XerC"/>
</dbReference>
<dbReference type="InterPro" id="IPR023009">
    <property type="entry name" value="Tyrosine_recombinase_XerC/XerD"/>
</dbReference>
<dbReference type="InterPro" id="IPR050090">
    <property type="entry name" value="Tyrosine_recombinase_XerCD"/>
</dbReference>
<dbReference type="NCBIfam" id="TIGR02224">
    <property type="entry name" value="recomb_XerC"/>
    <property type="match status" value="1"/>
</dbReference>
<dbReference type="PANTHER" id="PTHR30349">
    <property type="entry name" value="PHAGE INTEGRASE-RELATED"/>
    <property type="match status" value="1"/>
</dbReference>
<dbReference type="PANTHER" id="PTHR30349:SF81">
    <property type="entry name" value="TYROSINE RECOMBINASE XERC"/>
    <property type="match status" value="1"/>
</dbReference>
<dbReference type="Pfam" id="PF02899">
    <property type="entry name" value="Phage_int_SAM_1"/>
    <property type="match status" value="1"/>
</dbReference>
<dbReference type="Pfam" id="PF00589">
    <property type="entry name" value="Phage_integrase"/>
    <property type="match status" value="1"/>
</dbReference>
<dbReference type="SUPFAM" id="SSF56349">
    <property type="entry name" value="DNA breaking-rejoining enzymes"/>
    <property type="match status" value="1"/>
</dbReference>
<dbReference type="SUPFAM" id="SSF47823">
    <property type="entry name" value="lambda integrase-like, N-terminal domain"/>
    <property type="match status" value="1"/>
</dbReference>
<dbReference type="PROSITE" id="PS51900">
    <property type="entry name" value="CB"/>
    <property type="match status" value="1"/>
</dbReference>
<dbReference type="PROSITE" id="PS51898">
    <property type="entry name" value="TYR_RECOMBINASE"/>
    <property type="match status" value="1"/>
</dbReference>
<feature type="chain" id="PRO_1000187618" description="Tyrosine recombinase XerC">
    <location>
        <begin position="1"/>
        <end position="311"/>
    </location>
</feature>
<feature type="domain" description="Core-binding (CB)" evidence="3">
    <location>
        <begin position="11"/>
        <end position="97"/>
    </location>
</feature>
<feature type="domain" description="Tyr recombinase" evidence="2">
    <location>
        <begin position="118"/>
        <end position="298"/>
    </location>
</feature>
<feature type="active site" evidence="1">
    <location>
        <position position="157"/>
    </location>
</feature>
<feature type="active site" evidence="1">
    <location>
        <position position="181"/>
    </location>
</feature>
<feature type="active site" evidence="1">
    <location>
        <position position="250"/>
    </location>
</feature>
<feature type="active site" evidence="1">
    <location>
        <position position="253"/>
    </location>
</feature>
<feature type="active site" evidence="1">
    <location>
        <position position="276"/>
    </location>
</feature>
<feature type="active site" description="O-(3'-phospho-DNA)-tyrosine intermediate" evidence="1">
    <location>
        <position position="285"/>
    </location>
</feature>
<keyword id="KW-0131">Cell cycle</keyword>
<keyword id="KW-0132">Cell division</keyword>
<keyword id="KW-0159">Chromosome partition</keyword>
<keyword id="KW-0963">Cytoplasm</keyword>
<keyword id="KW-0229">DNA integration</keyword>
<keyword id="KW-0233">DNA recombination</keyword>
<keyword id="KW-0238">DNA-binding</keyword>
<evidence type="ECO:0000255" key="1">
    <source>
        <dbReference type="HAMAP-Rule" id="MF_01808"/>
    </source>
</evidence>
<evidence type="ECO:0000255" key="2">
    <source>
        <dbReference type="PROSITE-ProRule" id="PRU01246"/>
    </source>
</evidence>
<evidence type="ECO:0000255" key="3">
    <source>
        <dbReference type="PROSITE-ProRule" id="PRU01248"/>
    </source>
</evidence>
<proteinExistence type="inferred from homology"/>
<accession>C3LPX0</accession>
<reference key="1">
    <citation type="journal article" date="2008" name="PLoS ONE">
        <title>A recalibrated molecular clock and independent origins for the cholera pandemic clones.</title>
        <authorList>
            <person name="Feng L."/>
            <person name="Reeves P.R."/>
            <person name="Lan R."/>
            <person name="Ren Y."/>
            <person name="Gao C."/>
            <person name="Zhou Z."/>
            <person name="Ren Y."/>
            <person name="Cheng J."/>
            <person name="Wang W."/>
            <person name="Wang J."/>
            <person name="Qian W."/>
            <person name="Li D."/>
            <person name="Wang L."/>
        </authorList>
    </citation>
    <scope>NUCLEOTIDE SEQUENCE [LARGE SCALE GENOMIC DNA]</scope>
    <source>
        <strain>M66-2</strain>
    </source>
</reference>
<gene>
    <name evidence="1" type="primary">xerC</name>
    <name type="ordered locus">VCM66_0128</name>
</gene>
<organism>
    <name type="scientific">Vibrio cholerae serotype O1 (strain M66-2)</name>
    <dbReference type="NCBI Taxonomy" id="579112"/>
    <lineage>
        <taxon>Bacteria</taxon>
        <taxon>Pseudomonadati</taxon>
        <taxon>Pseudomonadota</taxon>
        <taxon>Gammaproteobacteria</taxon>
        <taxon>Vibrionales</taxon>
        <taxon>Vibrionaceae</taxon>
        <taxon>Vibrio</taxon>
    </lineage>
</organism>